<keyword id="KW-0028">Amino-acid biosynthesis</keyword>
<keyword id="KW-0057">Aromatic amino acid biosynthesis</keyword>
<keyword id="KW-0520">NAD</keyword>
<keyword id="KW-0560">Oxidoreductase</keyword>
<accession>A5UJ82</accession>
<dbReference type="EC" id="1.4.1.24" evidence="1"/>
<dbReference type="EMBL" id="CP000678">
    <property type="protein sequence ID" value="ABQ86260.1"/>
    <property type="molecule type" value="Genomic_DNA"/>
</dbReference>
<dbReference type="RefSeq" id="WP_011953651.1">
    <property type="nucleotide sequence ID" value="NC_009515.1"/>
</dbReference>
<dbReference type="STRING" id="420247.Msm_0055"/>
<dbReference type="EnsemblBacteria" id="ABQ86260">
    <property type="protein sequence ID" value="ABQ86260"/>
    <property type="gene ID" value="Msm_0055"/>
</dbReference>
<dbReference type="GeneID" id="78816679"/>
<dbReference type="KEGG" id="msi:Msm_0055"/>
<dbReference type="PATRIC" id="fig|420247.28.peg.56"/>
<dbReference type="eggNOG" id="arCOG04353">
    <property type="taxonomic scope" value="Archaea"/>
</dbReference>
<dbReference type="HOGENOM" id="CLU_056379_0_0_2"/>
<dbReference type="Proteomes" id="UP000001992">
    <property type="component" value="Chromosome"/>
</dbReference>
<dbReference type="GO" id="GO:0003856">
    <property type="term" value="F:3-dehydroquinate synthase activity"/>
    <property type="evidence" value="ECO:0007669"/>
    <property type="project" value="InterPro"/>
</dbReference>
<dbReference type="GO" id="GO:0102042">
    <property type="term" value="F:dehydroquinate synthase activity"/>
    <property type="evidence" value="ECO:0007669"/>
    <property type="project" value="UniProtKB-EC"/>
</dbReference>
<dbReference type="GO" id="GO:0051287">
    <property type="term" value="F:NAD binding"/>
    <property type="evidence" value="ECO:0007669"/>
    <property type="project" value="UniProtKB-UniRule"/>
</dbReference>
<dbReference type="GO" id="GO:0008652">
    <property type="term" value="P:amino acid biosynthetic process"/>
    <property type="evidence" value="ECO:0007669"/>
    <property type="project" value="UniProtKB-KW"/>
</dbReference>
<dbReference type="GO" id="GO:0009073">
    <property type="term" value="P:aromatic amino acid family biosynthetic process"/>
    <property type="evidence" value="ECO:0007669"/>
    <property type="project" value="UniProtKB-UniRule"/>
</dbReference>
<dbReference type="HAMAP" id="MF_01244">
    <property type="entry name" value="Arch_DHQ_synthase"/>
    <property type="match status" value="1"/>
</dbReference>
<dbReference type="InterPro" id="IPR002812">
    <property type="entry name" value="DHQ_synth"/>
</dbReference>
<dbReference type="NCBIfam" id="NF002626">
    <property type="entry name" value="PRK02290.1-4"/>
    <property type="match status" value="1"/>
</dbReference>
<dbReference type="PANTHER" id="PTHR33563">
    <property type="match status" value="1"/>
</dbReference>
<dbReference type="PANTHER" id="PTHR33563:SF1">
    <property type="entry name" value="3-DEHYDROQUINATE SYNTHASE"/>
    <property type="match status" value="1"/>
</dbReference>
<dbReference type="Pfam" id="PF01959">
    <property type="entry name" value="DHQS"/>
    <property type="match status" value="1"/>
</dbReference>
<dbReference type="PIRSF" id="PIRSF006655">
    <property type="entry name" value="DHQ_synth"/>
    <property type="match status" value="1"/>
</dbReference>
<evidence type="ECO:0000255" key="1">
    <source>
        <dbReference type="HAMAP-Rule" id="MF_01244"/>
    </source>
</evidence>
<proteinExistence type="inferred from homology"/>
<comment type="function">
    <text evidence="1">Catalyzes the oxidative deamination and cyclization of 2-amino-3,7-dideoxy-D-threo-hept-6-ulosonic acid (ADH) to yield 3-dehydroquinate (DHQ), which is fed into the canonical shikimic pathway of aromatic amino acid biosynthesis.</text>
</comment>
<comment type="catalytic activity">
    <reaction evidence="1">
        <text>2-amino-2,3,7-trideoxy-D-lyxo-hept-6-ulosonate + NAD(+) + H2O = 3-dehydroquinate + NH4(+) + NADH + H(+)</text>
        <dbReference type="Rhea" id="RHEA:25956"/>
        <dbReference type="ChEBI" id="CHEBI:15377"/>
        <dbReference type="ChEBI" id="CHEBI:15378"/>
        <dbReference type="ChEBI" id="CHEBI:28938"/>
        <dbReference type="ChEBI" id="CHEBI:32364"/>
        <dbReference type="ChEBI" id="CHEBI:57540"/>
        <dbReference type="ChEBI" id="CHEBI:57945"/>
        <dbReference type="ChEBI" id="CHEBI:58859"/>
        <dbReference type="EC" id="1.4.1.24"/>
    </reaction>
</comment>
<comment type="similarity">
    <text evidence="1">Belongs to the archaeal-type DHQ synthase family.</text>
</comment>
<gene>
    <name evidence="1" type="primary">aroB'</name>
    <name type="ordered locus">Msm_0055</name>
</gene>
<protein>
    <recommendedName>
        <fullName evidence="1">3-dehydroquinate synthase</fullName>
        <shortName evidence="1">DHQ synthase</shortName>
        <ecNumber evidence="1">1.4.1.24</ecNumber>
    </recommendedName>
    <alternativeName>
        <fullName evidence="1">3-dehydroquinate synthase II</fullName>
    </alternativeName>
</protein>
<name>DHQS_METS3</name>
<feature type="chain" id="PRO_0000372047" description="3-dehydroquinate synthase">
    <location>
        <begin position="1"/>
        <end position="368"/>
    </location>
</feature>
<sequence>MTPNKPWDDKKEMITTALESGISYVLDLDDYDKIQKLGNVKIVANSDDADIYLVGINGEGDGSLILSEDLNQSQDLQEAKKAKREGKTVCAYVEITDKNHEQLAVSLGSVADYIILISTDWTVIPLENIIADLQKADVKIIAAVADEDGAKLAIETLEHGTDGVIFEANDFNQIKKIAQLVVDASKIKYDLKVATVTNVKPLGSGDRVCVDTTDMMKPGEGMLIGSYSKSLFLVHSESLESEYVASRPFRVNAGPVQAYVMVPGNKTRYLSELVAGDEVLIVNTEGETRTAYVGRSKIERRPLILIEAEYEGKTIRTLLQNAETIRIVDADNNPLSVADIKIGDKVKVYVESNARHFGIAIDETIIEQ</sequence>
<reference key="1">
    <citation type="journal article" date="2007" name="Proc. Natl. Acad. Sci. U.S.A.">
        <title>Genomic and metabolic adaptations of Methanobrevibacter smithii to the human gut.</title>
        <authorList>
            <person name="Samuel B.S."/>
            <person name="Hansen E.E."/>
            <person name="Manchester J.K."/>
            <person name="Coutinho P.M."/>
            <person name="Henrissat B."/>
            <person name="Fulton R."/>
            <person name="Latreille P."/>
            <person name="Kim K."/>
            <person name="Wilson R.K."/>
            <person name="Gordon J.I."/>
        </authorList>
    </citation>
    <scope>NUCLEOTIDE SEQUENCE [LARGE SCALE GENOMIC DNA]</scope>
    <source>
        <strain>ATCC 35061 / DSM 861 / OCM 144 / PS</strain>
    </source>
</reference>
<organism>
    <name type="scientific">Methanobrevibacter smithii (strain ATCC 35061 / DSM 861 / OCM 144 / PS)</name>
    <dbReference type="NCBI Taxonomy" id="420247"/>
    <lineage>
        <taxon>Archaea</taxon>
        <taxon>Methanobacteriati</taxon>
        <taxon>Methanobacteriota</taxon>
        <taxon>Methanomada group</taxon>
        <taxon>Methanobacteria</taxon>
        <taxon>Methanobacteriales</taxon>
        <taxon>Methanobacteriaceae</taxon>
        <taxon>Methanobrevibacter</taxon>
    </lineage>
</organism>